<gene>
    <name evidence="1" type="primary">metN</name>
    <name type="ordered locus">RPD_3225</name>
</gene>
<accession>Q134N9</accession>
<name>METN_RHOPS</name>
<reference key="1">
    <citation type="submission" date="2006-03" db="EMBL/GenBank/DDBJ databases">
        <title>Complete sequence of Rhodopseudomonas palustris BisB5.</title>
        <authorList>
            <consortium name="US DOE Joint Genome Institute"/>
            <person name="Copeland A."/>
            <person name="Lucas S."/>
            <person name="Lapidus A."/>
            <person name="Barry K."/>
            <person name="Detter J.C."/>
            <person name="Glavina del Rio T."/>
            <person name="Hammon N."/>
            <person name="Israni S."/>
            <person name="Dalin E."/>
            <person name="Tice H."/>
            <person name="Pitluck S."/>
            <person name="Chain P."/>
            <person name="Malfatti S."/>
            <person name="Shin M."/>
            <person name="Vergez L."/>
            <person name="Schmutz J."/>
            <person name="Larimer F."/>
            <person name="Land M."/>
            <person name="Hauser L."/>
            <person name="Pelletier D.A."/>
            <person name="Kyrpides N."/>
            <person name="Lykidis A."/>
            <person name="Oda Y."/>
            <person name="Harwood C.S."/>
            <person name="Richardson P."/>
        </authorList>
    </citation>
    <scope>NUCLEOTIDE SEQUENCE [LARGE SCALE GENOMIC DNA]</scope>
    <source>
        <strain>BisB5</strain>
    </source>
</reference>
<proteinExistence type="inferred from homology"/>
<evidence type="ECO:0000255" key="1">
    <source>
        <dbReference type="HAMAP-Rule" id="MF_01719"/>
    </source>
</evidence>
<evidence type="ECO:0000256" key="2">
    <source>
        <dbReference type="SAM" id="MobiDB-lite"/>
    </source>
</evidence>
<evidence type="ECO:0000305" key="3"/>
<dbReference type="EC" id="7.4.2.11" evidence="1"/>
<dbReference type="EMBL" id="CP000283">
    <property type="protein sequence ID" value="ABE40450.1"/>
    <property type="status" value="ALT_INIT"/>
    <property type="molecule type" value="Genomic_DNA"/>
</dbReference>
<dbReference type="SMR" id="Q134N9"/>
<dbReference type="STRING" id="316057.RPD_3225"/>
<dbReference type="KEGG" id="rpd:RPD_3225"/>
<dbReference type="eggNOG" id="COG1135">
    <property type="taxonomic scope" value="Bacteria"/>
</dbReference>
<dbReference type="HOGENOM" id="CLU_000604_1_3_5"/>
<dbReference type="Proteomes" id="UP000001818">
    <property type="component" value="Chromosome"/>
</dbReference>
<dbReference type="GO" id="GO:0005886">
    <property type="term" value="C:plasma membrane"/>
    <property type="evidence" value="ECO:0007669"/>
    <property type="project" value="UniProtKB-SubCell"/>
</dbReference>
<dbReference type="GO" id="GO:0033232">
    <property type="term" value="F:ABC-type D-methionine transporter activity"/>
    <property type="evidence" value="ECO:0007669"/>
    <property type="project" value="UniProtKB-EC"/>
</dbReference>
<dbReference type="GO" id="GO:0005524">
    <property type="term" value="F:ATP binding"/>
    <property type="evidence" value="ECO:0007669"/>
    <property type="project" value="UniProtKB-KW"/>
</dbReference>
<dbReference type="GO" id="GO:0016887">
    <property type="term" value="F:ATP hydrolysis activity"/>
    <property type="evidence" value="ECO:0007669"/>
    <property type="project" value="InterPro"/>
</dbReference>
<dbReference type="CDD" id="cd03258">
    <property type="entry name" value="ABC_MetN_methionine_transporter"/>
    <property type="match status" value="1"/>
</dbReference>
<dbReference type="FunFam" id="3.40.50.300:FF:000056">
    <property type="entry name" value="Cell division ATP-binding protein FtsE"/>
    <property type="match status" value="1"/>
</dbReference>
<dbReference type="Gene3D" id="3.30.70.260">
    <property type="match status" value="1"/>
</dbReference>
<dbReference type="Gene3D" id="3.40.50.300">
    <property type="entry name" value="P-loop containing nucleotide triphosphate hydrolases"/>
    <property type="match status" value="1"/>
</dbReference>
<dbReference type="InterPro" id="IPR003593">
    <property type="entry name" value="AAA+_ATPase"/>
</dbReference>
<dbReference type="InterPro" id="IPR003439">
    <property type="entry name" value="ABC_transporter-like_ATP-bd"/>
</dbReference>
<dbReference type="InterPro" id="IPR017871">
    <property type="entry name" value="ABC_transporter-like_CS"/>
</dbReference>
<dbReference type="InterPro" id="IPR045865">
    <property type="entry name" value="ACT-like_dom_sf"/>
</dbReference>
<dbReference type="InterPro" id="IPR041701">
    <property type="entry name" value="MetN_ABC"/>
</dbReference>
<dbReference type="InterPro" id="IPR050086">
    <property type="entry name" value="MetN_ABC_transporter-like"/>
</dbReference>
<dbReference type="InterPro" id="IPR018449">
    <property type="entry name" value="NIL_domain"/>
</dbReference>
<dbReference type="InterPro" id="IPR027417">
    <property type="entry name" value="P-loop_NTPase"/>
</dbReference>
<dbReference type="PANTHER" id="PTHR43166">
    <property type="entry name" value="AMINO ACID IMPORT ATP-BINDING PROTEIN"/>
    <property type="match status" value="1"/>
</dbReference>
<dbReference type="PANTHER" id="PTHR43166:SF30">
    <property type="entry name" value="METHIONINE IMPORT ATP-BINDING PROTEIN METN"/>
    <property type="match status" value="1"/>
</dbReference>
<dbReference type="Pfam" id="PF00005">
    <property type="entry name" value="ABC_tran"/>
    <property type="match status" value="1"/>
</dbReference>
<dbReference type="Pfam" id="PF09383">
    <property type="entry name" value="NIL"/>
    <property type="match status" value="1"/>
</dbReference>
<dbReference type="SMART" id="SM00382">
    <property type="entry name" value="AAA"/>
    <property type="match status" value="1"/>
</dbReference>
<dbReference type="SMART" id="SM00930">
    <property type="entry name" value="NIL"/>
    <property type="match status" value="1"/>
</dbReference>
<dbReference type="SUPFAM" id="SSF55021">
    <property type="entry name" value="ACT-like"/>
    <property type="match status" value="1"/>
</dbReference>
<dbReference type="SUPFAM" id="SSF52540">
    <property type="entry name" value="P-loop containing nucleoside triphosphate hydrolases"/>
    <property type="match status" value="1"/>
</dbReference>
<dbReference type="PROSITE" id="PS00211">
    <property type="entry name" value="ABC_TRANSPORTER_1"/>
    <property type="match status" value="1"/>
</dbReference>
<dbReference type="PROSITE" id="PS50893">
    <property type="entry name" value="ABC_TRANSPORTER_2"/>
    <property type="match status" value="1"/>
</dbReference>
<dbReference type="PROSITE" id="PS51264">
    <property type="entry name" value="METN"/>
    <property type="match status" value="1"/>
</dbReference>
<feature type="chain" id="PRO_0000277695" description="Methionine import ATP-binding protein MetN">
    <location>
        <begin position="1"/>
        <end position="371"/>
    </location>
</feature>
<feature type="domain" description="ABC transporter" evidence="1">
    <location>
        <begin position="27"/>
        <end position="268"/>
    </location>
</feature>
<feature type="region of interest" description="Disordered" evidence="2">
    <location>
        <begin position="1"/>
        <end position="22"/>
    </location>
</feature>
<feature type="binding site" evidence="1">
    <location>
        <begin position="65"/>
        <end position="72"/>
    </location>
    <ligand>
        <name>ATP</name>
        <dbReference type="ChEBI" id="CHEBI:30616"/>
    </ligand>
</feature>
<organism>
    <name type="scientific">Rhodopseudomonas palustris (strain BisB5)</name>
    <dbReference type="NCBI Taxonomy" id="316057"/>
    <lineage>
        <taxon>Bacteria</taxon>
        <taxon>Pseudomonadati</taxon>
        <taxon>Pseudomonadota</taxon>
        <taxon>Alphaproteobacteria</taxon>
        <taxon>Hyphomicrobiales</taxon>
        <taxon>Nitrobacteraceae</taxon>
        <taxon>Rhodopseudomonas</taxon>
    </lineage>
</organism>
<protein>
    <recommendedName>
        <fullName evidence="1">Methionine import ATP-binding protein MetN</fullName>
        <ecNumber evidence="1">7.4.2.11</ecNumber>
    </recommendedName>
</protein>
<keyword id="KW-0029">Amino-acid transport</keyword>
<keyword id="KW-0067">ATP-binding</keyword>
<keyword id="KW-0997">Cell inner membrane</keyword>
<keyword id="KW-1003">Cell membrane</keyword>
<keyword id="KW-0472">Membrane</keyword>
<keyword id="KW-0547">Nucleotide-binding</keyword>
<keyword id="KW-1278">Translocase</keyword>
<keyword id="KW-0813">Transport</keyword>
<comment type="function">
    <text evidence="1">Part of the ABC transporter complex MetNIQ involved in methionine import. Responsible for energy coupling to the transport system.</text>
</comment>
<comment type="catalytic activity">
    <reaction evidence="1">
        <text>L-methionine(out) + ATP + H2O = L-methionine(in) + ADP + phosphate + H(+)</text>
        <dbReference type="Rhea" id="RHEA:29779"/>
        <dbReference type="ChEBI" id="CHEBI:15377"/>
        <dbReference type="ChEBI" id="CHEBI:15378"/>
        <dbReference type="ChEBI" id="CHEBI:30616"/>
        <dbReference type="ChEBI" id="CHEBI:43474"/>
        <dbReference type="ChEBI" id="CHEBI:57844"/>
        <dbReference type="ChEBI" id="CHEBI:456216"/>
        <dbReference type="EC" id="7.4.2.11"/>
    </reaction>
</comment>
<comment type="catalytic activity">
    <reaction evidence="1">
        <text>D-methionine(out) + ATP + H2O = D-methionine(in) + ADP + phosphate + H(+)</text>
        <dbReference type="Rhea" id="RHEA:29767"/>
        <dbReference type="ChEBI" id="CHEBI:15377"/>
        <dbReference type="ChEBI" id="CHEBI:15378"/>
        <dbReference type="ChEBI" id="CHEBI:30616"/>
        <dbReference type="ChEBI" id="CHEBI:43474"/>
        <dbReference type="ChEBI" id="CHEBI:57932"/>
        <dbReference type="ChEBI" id="CHEBI:456216"/>
        <dbReference type="EC" id="7.4.2.11"/>
    </reaction>
</comment>
<comment type="subunit">
    <text evidence="1">The complex is composed of two ATP-binding proteins (MetN), two transmembrane proteins (MetI) and a solute-binding protein (MetQ).</text>
</comment>
<comment type="subcellular location">
    <subcellularLocation>
        <location evidence="1">Cell inner membrane</location>
        <topology evidence="1">Peripheral membrane protein</topology>
    </subcellularLocation>
</comment>
<comment type="similarity">
    <text evidence="1">Belongs to the ABC transporter superfamily. Methionine importer (TC 3.A.1.24) family.</text>
</comment>
<comment type="sequence caution" evidence="3">
    <conflict type="erroneous initiation">
        <sequence resource="EMBL-CDS" id="ABE40450"/>
    </conflict>
</comment>
<sequence>MSEPFMNAPWQPPGDHPALKSPQPTGILIDSVRKLYPARKASAEVVALDDISLNVPKGSILGVIGRSGAGKSTLIRLINGLDKPTAGRVVVNDVEITSLDEPALRRARRSIGMVFQHFNLLSSRTAFANVALPLEIAGTPKAEIEKRVLPLLDMVGLADKRDRYPAELSGGQKQRVGIARALATEPAVLLSDEATSALDPETTDQILDLLKQINRDLHLTILFITHEMAVVKALADRVAVIEAGRIVEEGATFDVFATPRHEVTRRFVSSVTGSGAPDWLLAQLQPLQPPGGKAVLRVTFKGSDASQPLLSRVARTLGVDLNILFGQVEMIAGHPFGTLIVSLDASPDVLRQVIAQLSAGNNLVEQLGYVA</sequence>